<evidence type="ECO:0000255" key="1">
    <source>
        <dbReference type="HAMAP-Rule" id="MF_01006"/>
    </source>
</evidence>
<reference key="1">
    <citation type="journal article" date="2008" name="PLoS ONE">
        <title>Genome sequence of a lancefield group C Streptococcus zooepidemicus strain causing epidemic nephritis: new information about an old disease.</title>
        <authorList>
            <person name="Beres S.B."/>
            <person name="Sesso R."/>
            <person name="Pinto S.W.L."/>
            <person name="Hoe N.P."/>
            <person name="Porcella S.F."/>
            <person name="Deleo F.R."/>
            <person name="Musser J.M."/>
        </authorList>
    </citation>
    <scope>NUCLEOTIDE SEQUENCE [LARGE SCALE GENOMIC DNA]</scope>
    <source>
        <strain>MGCS10565</strain>
    </source>
</reference>
<feature type="chain" id="PRO_1000197409" description="Undecaprenyl-diphosphatase">
    <location>
        <begin position="1"/>
        <end position="279"/>
    </location>
</feature>
<feature type="transmembrane region" description="Helical" evidence="1">
    <location>
        <begin position="2"/>
        <end position="22"/>
    </location>
</feature>
<feature type="transmembrane region" description="Helical" evidence="1">
    <location>
        <begin position="44"/>
        <end position="64"/>
    </location>
</feature>
<feature type="transmembrane region" description="Helical" evidence="1">
    <location>
        <begin position="85"/>
        <end position="105"/>
    </location>
</feature>
<feature type="transmembrane region" description="Helical" evidence="1">
    <location>
        <begin position="113"/>
        <end position="133"/>
    </location>
</feature>
<feature type="transmembrane region" description="Helical" evidence="1">
    <location>
        <begin position="163"/>
        <end position="183"/>
    </location>
</feature>
<feature type="transmembrane region" description="Helical" evidence="1">
    <location>
        <begin position="188"/>
        <end position="208"/>
    </location>
</feature>
<feature type="transmembrane region" description="Helical" evidence="1">
    <location>
        <begin position="225"/>
        <end position="245"/>
    </location>
</feature>
<feature type="transmembrane region" description="Helical" evidence="1">
    <location>
        <begin position="255"/>
        <end position="275"/>
    </location>
</feature>
<sequence>MLFIELLKAIFFGVIEGVTEWLPISSTGHLILVQEFIRLHQDKAFMEMFNIVIQLGAIIAVIVIYFERLNPFQPGKSPQQIRLTWQLWLKVAIACIPSIIIAVPLDDWFDVHFNHMLPIAIALIVYGIAFLWIEKRNQTLEPRVVKLSRMSYKTAFFIGCFQVLSIIPGTSRSGATILGAIILGASRTVAADFTFFLAIPTMFGYSGLKALKFFIDGNHLTLSQLLVLLVASLTAFAVSLYVIKLLTDYVKKHDFTVFGRYRIVLGSLLIVYSVFKSLF</sequence>
<organism>
    <name type="scientific">Streptococcus equi subsp. zooepidemicus (strain MGCS10565)</name>
    <dbReference type="NCBI Taxonomy" id="552526"/>
    <lineage>
        <taxon>Bacteria</taxon>
        <taxon>Bacillati</taxon>
        <taxon>Bacillota</taxon>
        <taxon>Bacilli</taxon>
        <taxon>Lactobacillales</taxon>
        <taxon>Streptococcaceae</taxon>
        <taxon>Streptococcus</taxon>
    </lineage>
</organism>
<comment type="function">
    <text evidence="1">Catalyzes the dephosphorylation of undecaprenyl diphosphate (UPP). Confers resistance to bacitracin.</text>
</comment>
<comment type="catalytic activity">
    <reaction evidence="1">
        <text>di-trans,octa-cis-undecaprenyl diphosphate + H2O = di-trans,octa-cis-undecaprenyl phosphate + phosphate + H(+)</text>
        <dbReference type="Rhea" id="RHEA:28094"/>
        <dbReference type="ChEBI" id="CHEBI:15377"/>
        <dbReference type="ChEBI" id="CHEBI:15378"/>
        <dbReference type="ChEBI" id="CHEBI:43474"/>
        <dbReference type="ChEBI" id="CHEBI:58405"/>
        <dbReference type="ChEBI" id="CHEBI:60392"/>
        <dbReference type="EC" id="3.6.1.27"/>
    </reaction>
</comment>
<comment type="subcellular location">
    <subcellularLocation>
        <location evidence="1">Cell membrane</location>
        <topology evidence="1">Multi-pass membrane protein</topology>
    </subcellularLocation>
</comment>
<comment type="miscellaneous">
    <text>Bacitracin is thought to be involved in the inhibition of peptidoglycan synthesis by sequestering undecaprenyl diphosphate, thereby reducing the pool of lipid carrier available.</text>
</comment>
<comment type="similarity">
    <text evidence="1">Belongs to the UppP family.</text>
</comment>
<accession>B4U4X0</accession>
<proteinExistence type="inferred from homology"/>
<dbReference type="EC" id="3.6.1.27" evidence="1"/>
<dbReference type="EMBL" id="CP001129">
    <property type="protein sequence ID" value="ACG63037.1"/>
    <property type="molecule type" value="Genomic_DNA"/>
</dbReference>
<dbReference type="RefSeq" id="WP_012516293.1">
    <property type="nucleotide sequence ID" value="NC_011134.1"/>
</dbReference>
<dbReference type="SMR" id="B4U4X0"/>
<dbReference type="KEGG" id="sez:Sez_1708"/>
<dbReference type="HOGENOM" id="CLU_060296_2_0_9"/>
<dbReference type="Proteomes" id="UP000001873">
    <property type="component" value="Chromosome"/>
</dbReference>
<dbReference type="GO" id="GO:0005886">
    <property type="term" value="C:plasma membrane"/>
    <property type="evidence" value="ECO:0007669"/>
    <property type="project" value="UniProtKB-SubCell"/>
</dbReference>
<dbReference type="GO" id="GO:0050380">
    <property type="term" value="F:undecaprenyl-diphosphatase activity"/>
    <property type="evidence" value="ECO:0007669"/>
    <property type="project" value="UniProtKB-UniRule"/>
</dbReference>
<dbReference type="GO" id="GO:0071555">
    <property type="term" value="P:cell wall organization"/>
    <property type="evidence" value="ECO:0007669"/>
    <property type="project" value="UniProtKB-KW"/>
</dbReference>
<dbReference type="GO" id="GO:0009252">
    <property type="term" value="P:peptidoglycan biosynthetic process"/>
    <property type="evidence" value="ECO:0007669"/>
    <property type="project" value="UniProtKB-KW"/>
</dbReference>
<dbReference type="GO" id="GO:0008360">
    <property type="term" value="P:regulation of cell shape"/>
    <property type="evidence" value="ECO:0007669"/>
    <property type="project" value="UniProtKB-KW"/>
</dbReference>
<dbReference type="GO" id="GO:0046677">
    <property type="term" value="P:response to antibiotic"/>
    <property type="evidence" value="ECO:0007669"/>
    <property type="project" value="UniProtKB-UniRule"/>
</dbReference>
<dbReference type="HAMAP" id="MF_01006">
    <property type="entry name" value="Undec_diphosphatase"/>
    <property type="match status" value="1"/>
</dbReference>
<dbReference type="InterPro" id="IPR003824">
    <property type="entry name" value="UppP"/>
</dbReference>
<dbReference type="NCBIfam" id="NF001391">
    <property type="entry name" value="PRK00281.1-5"/>
    <property type="match status" value="1"/>
</dbReference>
<dbReference type="PANTHER" id="PTHR30622">
    <property type="entry name" value="UNDECAPRENYL-DIPHOSPHATASE"/>
    <property type="match status" value="1"/>
</dbReference>
<dbReference type="PANTHER" id="PTHR30622:SF3">
    <property type="entry name" value="UNDECAPRENYL-DIPHOSPHATASE"/>
    <property type="match status" value="1"/>
</dbReference>
<dbReference type="Pfam" id="PF02673">
    <property type="entry name" value="BacA"/>
    <property type="match status" value="1"/>
</dbReference>
<name>UPPP_STREM</name>
<keyword id="KW-0046">Antibiotic resistance</keyword>
<keyword id="KW-1003">Cell membrane</keyword>
<keyword id="KW-0133">Cell shape</keyword>
<keyword id="KW-0961">Cell wall biogenesis/degradation</keyword>
<keyword id="KW-0378">Hydrolase</keyword>
<keyword id="KW-0472">Membrane</keyword>
<keyword id="KW-0573">Peptidoglycan synthesis</keyword>
<keyword id="KW-0812">Transmembrane</keyword>
<keyword id="KW-1133">Transmembrane helix</keyword>
<protein>
    <recommendedName>
        <fullName evidence="1">Undecaprenyl-diphosphatase</fullName>
        <ecNumber evidence="1">3.6.1.27</ecNumber>
    </recommendedName>
    <alternativeName>
        <fullName evidence="1">Bacitracin resistance protein</fullName>
    </alternativeName>
    <alternativeName>
        <fullName evidence="1">Undecaprenyl pyrophosphate phosphatase</fullName>
    </alternativeName>
</protein>
<gene>
    <name evidence="1" type="primary">uppP</name>
    <name type="ordered locus">Sez_1708</name>
</gene>